<accession>A4QCL5</accession>
<evidence type="ECO:0000255" key="1">
    <source>
        <dbReference type="HAMAP-Rule" id="MF_00340"/>
    </source>
</evidence>
<evidence type="ECO:0000305" key="2"/>
<name>RL32_CORGB</name>
<sequence>MAVPKRRMSRANTRMRRSQWKADNVALQEVKIDGQTVRIPRRLVKAAQLGLVDVEQF</sequence>
<feature type="chain" id="PRO_0000296453" description="Large ribosomal subunit protein bL32">
    <location>
        <begin position="1"/>
        <end position="57"/>
    </location>
</feature>
<keyword id="KW-0687">Ribonucleoprotein</keyword>
<keyword id="KW-0689">Ribosomal protein</keyword>
<dbReference type="EMBL" id="AP009044">
    <property type="protein sequence ID" value="BAF53962.1"/>
    <property type="molecule type" value="Genomic_DNA"/>
</dbReference>
<dbReference type="RefSeq" id="WP_003858448.1">
    <property type="nucleotide sequence ID" value="NC_009342.1"/>
</dbReference>
<dbReference type="SMR" id="A4QCL5"/>
<dbReference type="GeneID" id="1018867"/>
<dbReference type="KEGG" id="cgt:cgR_0987"/>
<dbReference type="HOGENOM" id="CLU_203263_0_0_11"/>
<dbReference type="Proteomes" id="UP000006698">
    <property type="component" value="Chromosome"/>
</dbReference>
<dbReference type="GO" id="GO:0015934">
    <property type="term" value="C:large ribosomal subunit"/>
    <property type="evidence" value="ECO:0007669"/>
    <property type="project" value="InterPro"/>
</dbReference>
<dbReference type="GO" id="GO:0003735">
    <property type="term" value="F:structural constituent of ribosome"/>
    <property type="evidence" value="ECO:0007669"/>
    <property type="project" value="InterPro"/>
</dbReference>
<dbReference type="GO" id="GO:0006412">
    <property type="term" value="P:translation"/>
    <property type="evidence" value="ECO:0007669"/>
    <property type="project" value="UniProtKB-UniRule"/>
</dbReference>
<dbReference type="HAMAP" id="MF_00340">
    <property type="entry name" value="Ribosomal_bL32"/>
    <property type="match status" value="1"/>
</dbReference>
<dbReference type="InterPro" id="IPR002677">
    <property type="entry name" value="Ribosomal_bL32"/>
</dbReference>
<dbReference type="InterPro" id="IPR011332">
    <property type="entry name" value="Ribosomal_zn-bd"/>
</dbReference>
<dbReference type="NCBIfam" id="TIGR01031">
    <property type="entry name" value="rpmF_bact"/>
    <property type="match status" value="1"/>
</dbReference>
<dbReference type="Pfam" id="PF01783">
    <property type="entry name" value="Ribosomal_L32p"/>
    <property type="match status" value="1"/>
</dbReference>
<dbReference type="SUPFAM" id="SSF57829">
    <property type="entry name" value="Zn-binding ribosomal proteins"/>
    <property type="match status" value="1"/>
</dbReference>
<gene>
    <name evidence="1" type="primary">rpmF</name>
    <name type="ordered locus">cgR_0987</name>
</gene>
<reference key="1">
    <citation type="journal article" date="2007" name="Microbiology">
        <title>Comparative analysis of the Corynebacterium glutamicum group and complete genome sequence of strain R.</title>
        <authorList>
            <person name="Yukawa H."/>
            <person name="Omumasaba C.A."/>
            <person name="Nonaka H."/>
            <person name="Kos P."/>
            <person name="Okai N."/>
            <person name="Suzuki N."/>
            <person name="Suda M."/>
            <person name="Tsuge Y."/>
            <person name="Watanabe J."/>
            <person name="Ikeda Y."/>
            <person name="Vertes A.A."/>
            <person name="Inui M."/>
        </authorList>
    </citation>
    <scope>NUCLEOTIDE SEQUENCE [LARGE SCALE GENOMIC DNA]</scope>
    <source>
        <strain>R</strain>
    </source>
</reference>
<proteinExistence type="inferred from homology"/>
<comment type="similarity">
    <text evidence="1">Belongs to the bacterial ribosomal protein bL32 family.</text>
</comment>
<organism>
    <name type="scientific">Corynebacterium glutamicum (strain R)</name>
    <dbReference type="NCBI Taxonomy" id="340322"/>
    <lineage>
        <taxon>Bacteria</taxon>
        <taxon>Bacillati</taxon>
        <taxon>Actinomycetota</taxon>
        <taxon>Actinomycetes</taxon>
        <taxon>Mycobacteriales</taxon>
        <taxon>Corynebacteriaceae</taxon>
        <taxon>Corynebacterium</taxon>
    </lineage>
</organism>
<protein>
    <recommendedName>
        <fullName evidence="1">Large ribosomal subunit protein bL32</fullName>
    </recommendedName>
    <alternativeName>
        <fullName evidence="2">50S ribosomal protein L32</fullName>
    </alternativeName>
</protein>